<sequence>MLKDIHQHRILILDFGSQYAQLIARRVREIGVYCELMPCDIDEETIRDFNPHGIILSGGPETVTLSHTLRAPAFIFEIGCPVLGICYGMQTMAYQLGGKVNRTAKAEFGHAQLRVLNPAFLFDGIEDQVSPQGEPLLDVWMSHGDIVSELPPGFEATACTDNSPLAAMADFKRRFFGLQFHPEVTHTPQGDRILAHFVIHICQCIPNWTTKHIIEDSIRDIQEKVGKEQVIVGLSGGVDSAVTATLVHKAIGDQLVCVLVDTGLLRLNEVDEVLNVFQKHLGAKVICVDAKDRFMKALKGISDPEEKRKIAGEQFIRVFEEQAKKLNVKWLGQGTIYPDVIESAKTKTGKVHIIKTHHNVGGLPLNMELKLIEPLRELFKDEVRKLGLELGLPADLIYRHPFPGPGLAIRILGEVSAEYINILKQADAIFIEELKKSDYYHQVSQAFAVFMPLKSVGVKGDARHYGYIIALRAVKTVDFMTAQWADLPHEFLSKVSHRIVNEIKEVSRVVYDMTNKPPATIEWE</sequence>
<proteinExistence type="inferred from homology"/>
<feature type="chain" id="PRO_1000120269" description="GMP synthase [glutamine-hydrolyzing]">
    <location>
        <begin position="1"/>
        <end position="524"/>
    </location>
</feature>
<feature type="domain" description="Glutamine amidotransferase type-1" evidence="1">
    <location>
        <begin position="9"/>
        <end position="207"/>
    </location>
</feature>
<feature type="domain" description="GMPS ATP-PPase" evidence="1">
    <location>
        <begin position="208"/>
        <end position="399"/>
    </location>
</feature>
<feature type="active site" description="Nucleophile" evidence="1">
    <location>
        <position position="86"/>
    </location>
</feature>
<feature type="active site" evidence="1">
    <location>
        <position position="181"/>
    </location>
</feature>
<feature type="active site" evidence="1">
    <location>
        <position position="183"/>
    </location>
</feature>
<feature type="binding site" evidence="1">
    <location>
        <begin position="235"/>
        <end position="241"/>
    </location>
    <ligand>
        <name>ATP</name>
        <dbReference type="ChEBI" id="CHEBI:30616"/>
    </ligand>
</feature>
<accession>A9N8L6</accession>
<protein>
    <recommendedName>
        <fullName evidence="1">GMP synthase [glutamine-hydrolyzing]</fullName>
        <ecNumber evidence="1">6.3.5.2</ecNumber>
    </recommendedName>
    <alternativeName>
        <fullName evidence="1">GMP synthetase</fullName>
    </alternativeName>
    <alternativeName>
        <fullName evidence="1">Glutamine amidotransferase</fullName>
    </alternativeName>
</protein>
<dbReference type="EC" id="6.3.5.2" evidence="1"/>
<dbReference type="EMBL" id="CP000890">
    <property type="protein sequence ID" value="ABX79041.1"/>
    <property type="molecule type" value="Genomic_DNA"/>
</dbReference>
<dbReference type="RefSeq" id="WP_012220611.1">
    <property type="nucleotide sequence ID" value="NC_010117.1"/>
</dbReference>
<dbReference type="SMR" id="A9N8L6"/>
<dbReference type="KEGG" id="cbs:COXBURSA331_A1494"/>
<dbReference type="HOGENOM" id="CLU_014340_0_5_6"/>
<dbReference type="UniPathway" id="UPA00189">
    <property type="reaction ID" value="UER00296"/>
</dbReference>
<dbReference type="GO" id="GO:0005829">
    <property type="term" value="C:cytosol"/>
    <property type="evidence" value="ECO:0007669"/>
    <property type="project" value="TreeGrafter"/>
</dbReference>
<dbReference type="GO" id="GO:0005524">
    <property type="term" value="F:ATP binding"/>
    <property type="evidence" value="ECO:0007669"/>
    <property type="project" value="UniProtKB-UniRule"/>
</dbReference>
<dbReference type="GO" id="GO:0003921">
    <property type="term" value="F:GMP synthase activity"/>
    <property type="evidence" value="ECO:0007669"/>
    <property type="project" value="InterPro"/>
</dbReference>
<dbReference type="CDD" id="cd01742">
    <property type="entry name" value="GATase1_GMP_Synthase"/>
    <property type="match status" value="1"/>
</dbReference>
<dbReference type="CDD" id="cd01997">
    <property type="entry name" value="GMP_synthase_C"/>
    <property type="match status" value="1"/>
</dbReference>
<dbReference type="FunFam" id="3.30.300.10:FF:000002">
    <property type="entry name" value="GMP synthase [glutamine-hydrolyzing]"/>
    <property type="match status" value="1"/>
</dbReference>
<dbReference type="FunFam" id="3.40.50.620:FF:000001">
    <property type="entry name" value="GMP synthase [glutamine-hydrolyzing]"/>
    <property type="match status" value="1"/>
</dbReference>
<dbReference type="FunFam" id="3.40.50.880:FF:000001">
    <property type="entry name" value="GMP synthase [glutamine-hydrolyzing]"/>
    <property type="match status" value="1"/>
</dbReference>
<dbReference type="Gene3D" id="3.30.300.10">
    <property type="match status" value="1"/>
</dbReference>
<dbReference type="Gene3D" id="3.40.50.880">
    <property type="match status" value="1"/>
</dbReference>
<dbReference type="Gene3D" id="3.40.50.620">
    <property type="entry name" value="HUPs"/>
    <property type="match status" value="1"/>
</dbReference>
<dbReference type="HAMAP" id="MF_00344">
    <property type="entry name" value="GMP_synthase"/>
    <property type="match status" value="1"/>
</dbReference>
<dbReference type="InterPro" id="IPR029062">
    <property type="entry name" value="Class_I_gatase-like"/>
</dbReference>
<dbReference type="InterPro" id="IPR017926">
    <property type="entry name" value="GATASE"/>
</dbReference>
<dbReference type="InterPro" id="IPR001674">
    <property type="entry name" value="GMP_synth_C"/>
</dbReference>
<dbReference type="InterPro" id="IPR004739">
    <property type="entry name" value="GMP_synth_GATase"/>
</dbReference>
<dbReference type="InterPro" id="IPR022955">
    <property type="entry name" value="GMP_synthase"/>
</dbReference>
<dbReference type="InterPro" id="IPR025777">
    <property type="entry name" value="GMPS_ATP_PPase_dom"/>
</dbReference>
<dbReference type="InterPro" id="IPR022310">
    <property type="entry name" value="NAD/GMP_synthase"/>
</dbReference>
<dbReference type="InterPro" id="IPR014729">
    <property type="entry name" value="Rossmann-like_a/b/a_fold"/>
</dbReference>
<dbReference type="NCBIfam" id="TIGR00884">
    <property type="entry name" value="guaA_Cterm"/>
    <property type="match status" value="1"/>
</dbReference>
<dbReference type="NCBIfam" id="TIGR00888">
    <property type="entry name" value="guaA_Nterm"/>
    <property type="match status" value="1"/>
</dbReference>
<dbReference type="NCBIfam" id="NF000848">
    <property type="entry name" value="PRK00074.1"/>
    <property type="match status" value="1"/>
</dbReference>
<dbReference type="PANTHER" id="PTHR11922:SF2">
    <property type="entry name" value="GMP SYNTHASE [GLUTAMINE-HYDROLYZING]"/>
    <property type="match status" value="1"/>
</dbReference>
<dbReference type="PANTHER" id="PTHR11922">
    <property type="entry name" value="GMP SYNTHASE-RELATED"/>
    <property type="match status" value="1"/>
</dbReference>
<dbReference type="Pfam" id="PF00117">
    <property type="entry name" value="GATase"/>
    <property type="match status" value="1"/>
</dbReference>
<dbReference type="Pfam" id="PF00958">
    <property type="entry name" value="GMP_synt_C"/>
    <property type="match status" value="1"/>
</dbReference>
<dbReference type="Pfam" id="PF02540">
    <property type="entry name" value="NAD_synthase"/>
    <property type="match status" value="1"/>
</dbReference>
<dbReference type="PRINTS" id="PR00097">
    <property type="entry name" value="ANTSNTHASEII"/>
</dbReference>
<dbReference type="PRINTS" id="PR00099">
    <property type="entry name" value="CPSGATASE"/>
</dbReference>
<dbReference type="PRINTS" id="PR00096">
    <property type="entry name" value="GATASE"/>
</dbReference>
<dbReference type="SUPFAM" id="SSF52402">
    <property type="entry name" value="Adenine nucleotide alpha hydrolases-like"/>
    <property type="match status" value="1"/>
</dbReference>
<dbReference type="SUPFAM" id="SSF52317">
    <property type="entry name" value="Class I glutamine amidotransferase-like"/>
    <property type="match status" value="1"/>
</dbReference>
<dbReference type="SUPFAM" id="SSF54810">
    <property type="entry name" value="GMP synthetase C-terminal dimerisation domain"/>
    <property type="match status" value="1"/>
</dbReference>
<dbReference type="PROSITE" id="PS51273">
    <property type="entry name" value="GATASE_TYPE_1"/>
    <property type="match status" value="1"/>
</dbReference>
<dbReference type="PROSITE" id="PS51553">
    <property type="entry name" value="GMPS_ATP_PPASE"/>
    <property type="match status" value="1"/>
</dbReference>
<name>GUAA_COXBR</name>
<keyword id="KW-0067">ATP-binding</keyword>
<keyword id="KW-0315">Glutamine amidotransferase</keyword>
<keyword id="KW-0332">GMP biosynthesis</keyword>
<keyword id="KW-0436">Ligase</keyword>
<keyword id="KW-0547">Nucleotide-binding</keyword>
<keyword id="KW-0658">Purine biosynthesis</keyword>
<reference key="1">
    <citation type="submission" date="2007-11" db="EMBL/GenBank/DDBJ databases">
        <title>Genome sequencing of phylogenetically and phenotypically diverse Coxiella burnetii isolates.</title>
        <authorList>
            <person name="Seshadri R."/>
            <person name="Samuel J.E."/>
        </authorList>
    </citation>
    <scope>NUCLEOTIDE SEQUENCE [LARGE SCALE GENOMIC DNA]</scope>
    <source>
        <strain>RSA 331 / Henzerling II</strain>
    </source>
</reference>
<gene>
    <name evidence="1" type="primary">guaA</name>
    <name type="ordered locus">COXBURSA331_A1494</name>
</gene>
<evidence type="ECO:0000255" key="1">
    <source>
        <dbReference type="HAMAP-Rule" id="MF_00344"/>
    </source>
</evidence>
<comment type="function">
    <text evidence="1">Catalyzes the synthesis of GMP from XMP.</text>
</comment>
<comment type="catalytic activity">
    <reaction evidence="1">
        <text>XMP + L-glutamine + ATP + H2O = GMP + L-glutamate + AMP + diphosphate + 2 H(+)</text>
        <dbReference type="Rhea" id="RHEA:11680"/>
        <dbReference type="ChEBI" id="CHEBI:15377"/>
        <dbReference type="ChEBI" id="CHEBI:15378"/>
        <dbReference type="ChEBI" id="CHEBI:29985"/>
        <dbReference type="ChEBI" id="CHEBI:30616"/>
        <dbReference type="ChEBI" id="CHEBI:33019"/>
        <dbReference type="ChEBI" id="CHEBI:57464"/>
        <dbReference type="ChEBI" id="CHEBI:58115"/>
        <dbReference type="ChEBI" id="CHEBI:58359"/>
        <dbReference type="ChEBI" id="CHEBI:456215"/>
        <dbReference type="EC" id="6.3.5.2"/>
    </reaction>
</comment>
<comment type="pathway">
    <text evidence="1">Purine metabolism; GMP biosynthesis; GMP from XMP (L-Gln route): step 1/1.</text>
</comment>
<comment type="subunit">
    <text evidence="1">Homodimer.</text>
</comment>
<organism>
    <name type="scientific">Coxiella burnetii (strain RSA 331 / Henzerling II)</name>
    <dbReference type="NCBI Taxonomy" id="360115"/>
    <lineage>
        <taxon>Bacteria</taxon>
        <taxon>Pseudomonadati</taxon>
        <taxon>Pseudomonadota</taxon>
        <taxon>Gammaproteobacteria</taxon>
        <taxon>Legionellales</taxon>
        <taxon>Coxiellaceae</taxon>
        <taxon>Coxiella</taxon>
    </lineage>
</organism>